<sequence length="249" mass="28157">MWVGVISLFPEMFRSVTDFGVTGQAVKKGLLSIETWNPRDFTHDKHRTVDDRPYGGGPGMLMMVQPLRDAIHAAKQASPGKTKVIYLSPQGRKLDQQGVEELATNENLLLICGRYEGVDERIIQSEVDEEWSIGDFVMTGGEIPAMTLIDSVSRFVPGVLGDFASAEEDSFANGLLDCPHYTRPEVLDGKEVPEVLMSGNHKEIRRWRLKQSLGRTWQRRPELLENLALTDEQEQLLAEFIQETHHKRK</sequence>
<evidence type="ECO:0000250" key="1"/>
<evidence type="ECO:0000305" key="2"/>
<name>TRMD_VIBVU</name>
<proteinExistence type="inferred from homology"/>
<organism>
    <name type="scientific">Vibrio vulnificus (strain CMCP6)</name>
    <dbReference type="NCBI Taxonomy" id="216895"/>
    <lineage>
        <taxon>Bacteria</taxon>
        <taxon>Pseudomonadati</taxon>
        <taxon>Pseudomonadota</taxon>
        <taxon>Gammaproteobacteria</taxon>
        <taxon>Vibrionales</taxon>
        <taxon>Vibrionaceae</taxon>
        <taxon>Vibrio</taxon>
    </lineage>
</organism>
<dbReference type="EC" id="2.1.1.228"/>
<dbReference type="EMBL" id="AE016795">
    <property type="protein sequence ID" value="AAO10036.1"/>
    <property type="molecule type" value="Genomic_DNA"/>
</dbReference>
<dbReference type="RefSeq" id="WP_011079543.1">
    <property type="nucleotide sequence ID" value="NC_004459.3"/>
</dbReference>
<dbReference type="SMR" id="Q8CWK5"/>
<dbReference type="KEGG" id="vvu:VV1_1617"/>
<dbReference type="HOGENOM" id="CLU_047363_0_1_6"/>
<dbReference type="Proteomes" id="UP000002275">
    <property type="component" value="Chromosome 1"/>
</dbReference>
<dbReference type="GO" id="GO:0005829">
    <property type="term" value="C:cytosol"/>
    <property type="evidence" value="ECO:0007669"/>
    <property type="project" value="TreeGrafter"/>
</dbReference>
<dbReference type="GO" id="GO:0052906">
    <property type="term" value="F:tRNA (guanine(37)-N1)-methyltransferase activity"/>
    <property type="evidence" value="ECO:0007669"/>
    <property type="project" value="UniProtKB-UniRule"/>
</dbReference>
<dbReference type="GO" id="GO:0002939">
    <property type="term" value="P:tRNA N1-guanine methylation"/>
    <property type="evidence" value="ECO:0007669"/>
    <property type="project" value="TreeGrafter"/>
</dbReference>
<dbReference type="CDD" id="cd18080">
    <property type="entry name" value="TrmD-like"/>
    <property type="match status" value="1"/>
</dbReference>
<dbReference type="FunFam" id="1.10.1270.20:FF:000001">
    <property type="entry name" value="tRNA (guanine-N(1)-)-methyltransferase"/>
    <property type="match status" value="1"/>
</dbReference>
<dbReference type="FunFam" id="3.40.1280.10:FF:000001">
    <property type="entry name" value="tRNA (guanine-N(1)-)-methyltransferase"/>
    <property type="match status" value="1"/>
</dbReference>
<dbReference type="Gene3D" id="3.40.1280.10">
    <property type="match status" value="1"/>
</dbReference>
<dbReference type="Gene3D" id="1.10.1270.20">
    <property type="entry name" value="tRNA(m1g37)methyltransferase, domain 2"/>
    <property type="match status" value="1"/>
</dbReference>
<dbReference type="HAMAP" id="MF_00605">
    <property type="entry name" value="TrmD"/>
    <property type="match status" value="1"/>
</dbReference>
<dbReference type="InterPro" id="IPR029028">
    <property type="entry name" value="Alpha/beta_knot_MTases"/>
</dbReference>
<dbReference type="InterPro" id="IPR023148">
    <property type="entry name" value="tRNA_m1G_MeTrfase_C_sf"/>
</dbReference>
<dbReference type="InterPro" id="IPR002649">
    <property type="entry name" value="tRNA_m1G_MeTrfase_TrmD"/>
</dbReference>
<dbReference type="InterPro" id="IPR029026">
    <property type="entry name" value="tRNA_m1G_MTases_N"/>
</dbReference>
<dbReference type="InterPro" id="IPR016009">
    <property type="entry name" value="tRNA_MeTrfase_TRMD/TRM10"/>
</dbReference>
<dbReference type="NCBIfam" id="NF000648">
    <property type="entry name" value="PRK00026.1"/>
    <property type="match status" value="1"/>
</dbReference>
<dbReference type="NCBIfam" id="TIGR00088">
    <property type="entry name" value="trmD"/>
    <property type="match status" value="1"/>
</dbReference>
<dbReference type="PANTHER" id="PTHR46417">
    <property type="entry name" value="TRNA (GUANINE-N(1)-)-METHYLTRANSFERASE"/>
    <property type="match status" value="1"/>
</dbReference>
<dbReference type="PANTHER" id="PTHR46417:SF1">
    <property type="entry name" value="TRNA (GUANINE-N(1)-)-METHYLTRANSFERASE"/>
    <property type="match status" value="1"/>
</dbReference>
<dbReference type="Pfam" id="PF01746">
    <property type="entry name" value="tRNA_m1G_MT"/>
    <property type="match status" value="1"/>
</dbReference>
<dbReference type="PIRSF" id="PIRSF000386">
    <property type="entry name" value="tRNA_mtase"/>
    <property type="match status" value="1"/>
</dbReference>
<dbReference type="SUPFAM" id="SSF75217">
    <property type="entry name" value="alpha/beta knot"/>
    <property type="match status" value="1"/>
</dbReference>
<comment type="function">
    <text evidence="1">Specifically methylates guanosine-37 in various tRNAs.</text>
</comment>
<comment type="catalytic activity">
    <reaction>
        <text>guanosine(37) in tRNA + S-adenosyl-L-methionine = N(1)-methylguanosine(37) in tRNA + S-adenosyl-L-homocysteine + H(+)</text>
        <dbReference type="Rhea" id="RHEA:36899"/>
        <dbReference type="Rhea" id="RHEA-COMP:10145"/>
        <dbReference type="Rhea" id="RHEA-COMP:10147"/>
        <dbReference type="ChEBI" id="CHEBI:15378"/>
        <dbReference type="ChEBI" id="CHEBI:57856"/>
        <dbReference type="ChEBI" id="CHEBI:59789"/>
        <dbReference type="ChEBI" id="CHEBI:73542"/>
        <dbReference type="ChEBI" id="CHEBI:74269"/>
        <dbReference type="EC" id="2.1.1.228"/>
    </reaction>
</comment>
<comment type="subunit">
    <text evidence="1">Homodimer.</text>
</comment>
<comment type="subcellular location">
    <subcellularLocation>
        <location evidence="2">Cytoplasm</location>
    </subcellularLocation>
</comment>
<comment type="similarity">
    <text evidence="2">Belongs to the RNA methyltransferase TrmD family.</text>
</comment>
<reference key="1">
    <citation type="submission" date="2002-12" db="EMBL/GenBank/DDBJ databases">
        <title>Complete genome sequence of Vibrio vulnificus CMCP6.</title>
        <authorList>
            <person name="Rhee J.H."/>
            <person name="Kim S.Y."/>
            <person name="Chung S.S."/>
            <person name="Kim J.J."/>
            <person name="Moon Y.H."/>
            <person name="Jeong H."/>
            <person name="Choy H.E."/>
        </authorList>
    </citation>
    <scope>NUCLEOTIDE SEQUENCE [LARGE SCALE GENOMIC DNA]</scope>
    <source>
        <strain>CMCP6</strain>
    </source>
</reference>
<keyword id="KW-0963">Cytoplasm</keyword>
<keyword id="KW-0489">Methyltransferase</keyword>
<keyword id="KW-0949">S-adenosyl-L-methionine</keyword>
<keyword id="KW-0808">Transferase</keyword>
<keyword id="KW-0819">tRNA processing</keyword>
<gene>
    <name type="primary">trmD</name>
    <name type="ordered locus">VV1_1617</name>
</gene>
<feature type="chain" id="PRO_0000060495" description="tRNA (guanine-N(1)-)-methyltransferase">
    <location>
        <begin position="1"/>
        <end position="249"/>
    </location>
</feature>
<feature type="binding site" evidence="1">
    <location>
        <position position="113"/>
    </location>
    <ligand>
        <name>S-adenosyl-L-methionine</name>
        <dbReference type="ChEBI" id="CHEBI:59789"/>
    </ligand>
</feature>
<feature type="binding site" evidence="1">
    <location>
        <begin position="133"/>
        <end position="138"/>
    </location>
    <ligand>
        <name>S-adenosyl-L-methionine</name>
        <dbReference type="ChEBI" id="CHEBI:59789"/>
    </ligand>
</feature>
<protein>
    <recommendedName>
        <fullName>tRNA (guanine-N(1)-)-methyltransferase</fullName>
        <ecNumber>2.1.1.228</ecNumber>
    </recommendedName>
    <alternativeName>
        <fullName>M1G-methyltransferase</fullName>
    </alternativeName>
    <alternativeName>
        <fullName>tRNA [GM37] methyltransferase</fullName>
    </alternativeName>
</protein>
<accession>Q8CWK5</accession>